<dbReference type="EC" id="3.1.1.61" evidence="1"/>
<dbReference type="EC" id="3.5.1.44" evidence="1"/>
<dbReference type="EMBL" id="CP000089">
    <property type="protein sequence ID" value="AAZ45488.1"/>
    <property type="molecule type" value="Genomic_DNA"/>
</dbReference>
<dbReference type="SMR" id="Q47I43"/>
<dbReference type="STRING" id="159087.Daro_0732"/>
<dbReference type="KEGG" id="dar:Daro_0732"/>
<dbReference type="eggNOG" id="COG2201">
    <property type="taxonomic scope" value="Bacteria"/>
</dbReference>
<dbReference type="HOGENOM" id="CLU_000445_51_0_4"/>
<dbReference type="OrthoDB" id="9793421at2"/>
<dbReference type="GO" id="GO:0005737">
    <property type="term" value="C:cytoplasm"/>
    <property type="evidence" value="ECO:0007669"/>
    <property type="project" value="UniProtKB-SubCell"/>
</dbReference>
<dbReference type="GO" id="GO:0000156">
    <property type="term" value="F:phosphorelay response regulator activity"/>
    <property type="evidence" value="ECO:0007669"/>
    <property type="project" value="InterPro"/>
</dbReference>
<dbReference type="GO" id="GO:0008984">
    <property type="term" value="F:protein-glutamate methylesterase activity"/>
    <property type="evidence" value="ECO:0007669"/>
    <property type="project" value="UniProtKB-UniRule"/>
</dbReference>
<dbReference type="GO" id="GO:0050568">
    <property type="term" value="F:protein-glutamine glutaminase activity"/>
    <property type="evidence" value="ECO:0007669"/>
    <property type="project" value="UniProtKB-UniRule"/>
</dbReference>
<dbReference type="GO" id="GO:0006935">
    <property type="term" value="P:chemotaxis"/>
    <property type="evidence" value="ECO:0007669"/>
    <property type="project" value="UniProtKB-UniRule"/>
</dbReference>
<dbReference type="CDD" id="cd16432">
    <property type="entry name" value="CheB_Rec"/>
    <property type="match status" value="1"/>
</dbReference>
<dbReference type="CDD" id="cd17541">
    <property type="entry name" value="REC_CheB-like"/>
    <property type="match status" value="1"/>
</dbReference>
<dbReference type="FunFam" id="3.40.50.2300:FF:000060">
    <property type="entry name" value="Protein-glutamate methylesterase/protein-glutamine glutaminase"/>
    <property type="match status" value="1"/>
</dbReference>
<dbReference type="Gene3D" id="3.40.50.2300">
    <property type="match status" value="1"/>
</dbReference>
<dbReference type="Gene3D" id="3.40.50.180">
    <property type="entry name" value="Methylesterase CheB, C-terminal domain"/>
    <property type="match status" value="1"/>
</dbReference>
<dbReference type="HAMAP" id="MF_00099">
    <property type="entry name" value="CheB_chemtxs"/>
    <property type="match status" value="1"/>
</dbReference>
<dbReference type="InterPro" id="IPR008248">
    <property type="entry name" value="CheB-like"/>
</dbReference>
<dbReference type="InterPro" id="IPR035909">
    <property type="entry name" value="CheB_C"/>
</dbReference>
<dbReference type="InterPro" id="IPR011006">
    <property type="entry name" value="CheY-like_superfamily"/>
</dbReference>
<dbReference type="InterPro" id="IPR000673">
    <property type="entry name" value="Sig_transdc_resp-reg_Me-estase"/>
</dbReference>
<dbReference type="InterPro" id="IPR001789">
    <property type="entry name" value="Sig_transdc_resp-reg_receiver"/>
</dbReference>
<dbReference type="NCBIfam" id="NF001965">
    <property type="entry name" value="PRK00742.1"/>
    <property type="match status" value="1"/>
</dbReference>
<dbReference type="NCBIfam" id="NF009206">
    <property type="entry name" value="PRK12555.1"/>
    <property type="match status" value="1"/>
</dbReference>
<dbReference type="PANTHER" id="PTHR42872">
    <property type="entry name" value="PROTEIN-GLUTAMATE METHYLESTERASE/PROTEIN-GLUTAMINE GLUTAMINASE"/>
    <property type="match status" value="1"/>
</dbReference>
<dbReference type="PANTHER" id="PTHR42872:SF6">
    <property type="entry name" value="PROTEIN-GLUTAMATE METHYLESTERASE_PROTEIN-GLUTAMINE GLUTAMINASE"/>
    <property type="match status" value="1"/>
</dbReference>
<dbReference type="Pfam" id="PF01339">
    <property type="entry name" value="CheB_methylest"/>
    <property type="match status" value="1"/>
</dbReference>
<dbReference type="Pfam" id="PF00072">
    <property type="entry name" value="Response_reg"/>
    <property type="match status" value="1"/>
</dbReference>
<dbReference type="PIRSF" id="PIRSF000876">
    <property type="entry name" value="RR_chemtxs_CheB"/>
    <property type="match status" value="1"/>
</dbReference>
<dbReference type="SMART" id="SM00448">
    <property type="entry name" value="REC"/>
    <property type="match status" value="1"/>
</dbReference>
<dbReference type="SUPFAM" id="SSF52172">
    <property type="entry name" value="CheY-like"/>
    <property type="match status" value="1"/>
</dbReference>
<dbReference type="SUPFAM" id="SSF52738">
    <property type="entry name" value="Methylesterase CheB, C-terminal domain"/>
    <property type="match status" value="1"/>
</dbReference>
<dbReference type="PROSITE" id="PS50122">
    <property type="entry name" value="CHEB"/>
    <property type="match status" value="1"/>
</dbReference>
<dbReference type="PROSITE" id="PS50110">
    <property type="entry name" value="RESPONSE_REGULATORY"/>
    <property type="match status" value="1"/>
</dbReference>
<accession>Q47I43</accession>
<protein>
    <recommendedName>
        <fullName evidence="1">Protein-glutamate methylesterase/protein-glutamine glutaminase 1</fullName>
        <ecNumber evidence="1">3.1.1.61</ecNumber>
        <ecNumber evidence="1">3.5.1.44</ecNumber>
    </recommendedName>
</protein>
<proteinExistence type="inferred from homology"/>
<gene>
    <name evidence="1" type="primary">cheB1</name>
    <name type="ordered locus">Daro_0732</name>
</gene>
<evidence type="ECO:0000255" key="1">
    <source>
        <dbReference type="HAMAP-Rule" id="MF_00099"/>
    </source>
</evidence>
<keyword id="KW-0145">Chemotaxis</keyword>
<keyword id="KW-0963">Cytoplasm</keyword>
<keyword id="KW-0378">Hydrolase</keyword>
<keyword id="KW-0597">Phosphoprotein</keyword>
<reference key="1">
    <citation type="journal article" date="2009" name="BMC Genomics">
        <title>Metabolic analysis of the soil microbe Dechloromonas aromatica str. RCB: indications of a surprisingly complex life-style and cryptic anaerobic pathways for aromatic degradation.</title>
        <authorList>
            <person name="Salinero K.K."/>
            <person name="Keller K."/>
            <person name="Feil W.S."/>
            <person name="Feil H."/>
            <person name="Trong S."/>
            <person name="Di Bartolo G."/>
            <person name="Lapidus A."/>
        </authorList>
    </citation>
    <scope>NUCLEOTIDE SEQUENCE [LARGE SCALE GENOMIC DNA]</scope>
    <source>
        <strain>RCB</strain>
    </source>
</reference>
<sequence length="350" mass="37188">MPIKTRVLVVDDSALMRGLLSQMINLAPDMEVVGAAPDAQSAREMIKVLNPDVLTLDVQMPKMDGLEFLERLMRLRPMPVVMVSSFTEAGSDTTLKALELGAIDFIGKPRADGGRSVENYAEELVEKIRAAKAARLRRAMTGNSVRAATPASASPKSGLGASGKIIFVGASTGGTEAIKDFLLGIPADCPPILIVQHMPEAFTASFARRLDSLCAPRIIEAKGNEKVEPGTIYVAPGHSHLLIRRGTAGFLTELAATPPVNRHRPAVDVLFDSAATLVGRKAIGVILTGMGKDGAQGLLRMRQAGARTFGQDESSCVVYGMPREAFLIGAVEEQCSLDEMARRVLGAVSA</sequence>
<name>CHEB1_DECAR</name>
<comment type="function">
    <text evidence="1">Involved in chemotaxis. Part of a chemotaxis signal transduction system that modulates chemotaxis in response to various stimuli. Catalyzes the demethylation of specific methylglutamate residues introduced into the chemoreceptors (methyl-accepting chemotaxis proteins or MCP) by CheR. Also mediates the irreversible deamidation of specific glutamine residues to glutamic acid.</text>
</comment>
<comment type="catalytic activity">
    <reaction evidence="1">
        <text>[protein]-L-glutamate 5-O-methyl ester + H2O = L-glutamyl-[protein] + methanol + H(+)</text>
        <dbReference type="Rhea" id="RHEA:23236"/>
        <dbReference type="Rhea" id="RHEA-COMP:10208"/>
        <dbReference type="Rhea" id="RHEA-COMP:10311"/>
        <dbReference type="ChEBI" id="CHEBI:15377"/>
        <dbReference type="ChEBI" id="CHEBI:15378"/>
        <dbReference type="ChEBI" id="CHEBI:17790"/>
        <dbReference type="ChEBI" id="CHEBI:29973"/>
        <dbReference type="ChEBI" id="CHEBI:82795"/>
        <dbReference type="EC" id="3.1.1.61"/>
    </reaction>
</comment>
<comment type="catalytic activity">
    <reaction evidence="1">
        <text>L-glutaminyl-[protein] + H2O = L-glutamyl-[protein] + NH4(+)</text>
        <dbReference type="Rhea" id="RHEA:16441"/>
        <dbReference type="Rhea" id="RHEA-COMP:10207"/>
        <dbReference type="Rhea" id="RHEA-COMP:10208"/>
        <dbReference type="ChEBI" id="CHEBI:15377"/>
        <dbReference type="ChEBI" id="CHEBI:28938"/>
        <dbReference type="ChEBI" id="CHEBI:29973"/>
        <dbReference type="ChEBI" id="CHEBI:30011"/>
        <dbReference type="EC" id="3.5.1.44"/>
    </reaction>
</comment>
<comment type="subcellular location">
    <subcellularLocation>
        <location evidence="1">Cytoplasm</location>
    </subcellularLocation>
</comment>
<comment type="domain">
    <text evidence="1">Contains a C-terminal catalytic domain, and an N-terminal region which modulates catalytic activity.</text>
</comment>
<comment type="PTM">
    <text evidence="1">Phosphorylated by CheA. Phosphorylation of the N-terminal regulatory domain activates the methylesterase activity.</text>
</comment>
<comment type="similarity">
    <text evidence="1">Belongs to the CheB family.</text>
</comment>
<feature type="chain" id="PRO_0000225455" description="Protein-glutamate methylesterase/protein-glutamine glutaminase 1">
    <location>
        <begin position="1"/>
        <end position="350"/>
    </location>
</feature>
<feature type="domain" description="Response regulatory" evidence="1">
    <location>
        <begin position="6"/>
        <end position="123"/>
    </location>
</feature>
<feature type="domain" description="CheB-type methylesterase" evidence="1">
    <location>
        <begin position="159"/>
        <end position="350"/>
    </location>
</feature>
<feature type="active site" evidence="1">
    <location>
        <position position="171"/>
    </location>
</feature>
<feature type="active site" evidence="1">
    <location>
        <position position="197"/>
    </location>
</feature>
<feature type="active site" evidence="1">
    <location>
        <position position="293"/>
    </location>
</feature>
<feature type="modified residue" description="4-aspartylphosphate" evidence="1">
    <location>
        <position position="57"/>
    </location>
</feature>
<organism>
    <name type="scientific">Dechloromonas aromatica (strain RCB)</name>
    <dbReference type="NCBI Taxonomy" id="159087"/>
    <lineage>
        <taxon>Bacteria</taxon>
        <taxon>Pseudomonadati</taxon>
        <taxon>Pseudomonadota</taxon>
        <taxon>Betaproteobacteria</taxon>
        <taxon>Rhodocyclales</taxon>
        <taxon>Azonexaceae</taxon>
        <taxon>Dechloromonas</taxon>
    </lineage>
</organism>